<protein>
    <recommendedName>
        <fullName evidence="1">Acyl carrier protein</fullName>
        <shortName evidence="1">ACP</shortName>
    </recommendedName>
</protein>
<gene>
    <name evidence="1" type="primary">acpP</name>
    <name type="ordered locus">CGSHiGG_03365</name>
</gene>
<comment type="function">
    <text evidence="1">Carrier of the growing fatty acid chain in fatty acid biosynthesis.</text>
</comment>
<comment type="pathway">
    <text evidence="1">Lipid metabolism; fatty acid biosynthesis.</text>
</comment>
<comment type="subcellular location">
    <subcellularLocation>
        <location evidence="1">Cytoplasm</location>
    </subcellularLocation>
</comment>
<comment type="PTM">
    <text evidence="1">4'-phosphopantetheine is transferred from CoA to a specific serine of apo-ACP by AcpS. This modification is essential for activity because fatty acids are bound in thioester linkage to the sulfhydryl of the prosthetic group.</text>
</comment>
<comment type="similarity">
    <text evidence="1">Belongs to the acyl carrier protein (ACP) family.</text>
</comment>
<accession>A5UFV8</accession>
<dbReference type="EMBL" id="CP000672">
    <property type="protein sequence ID" value="ABQ99663.1"/>
    <property type="molecule type" value="Genomic_DNA"/>
</dbReference>
<dbReference type="SMR" id="A5UFV8"/>
<dbReference type="KEGG" id="hiq:CGSHiGG_03365"/>
<dbReference type="HOGENOM" id="CLU_108696_5_1_6"/>
<dbReference type="UniPathway" id="UPA00094"/>
<dbReference type="Proteomes" id="UP000001990">
    <property type="component" value="Chromosome"/>
</dbReference>
<dbReference type="GO" id="GO:0005829">
    <property type="term" value="C:cytosol"/>
    <property type="evidence" value="ECO:0007669"/>
    <property type="project" value="TreeGrafter"/>
</dbReference>
<dbReference type="GO" id="GO:0016020">
    <property type="term" value="C:membrane"/>
    <property type="evidence" value="ECO:0007669"/>
    <property type="project" value="GOC"/>
</dbReference>
<dbReference type="GO" id="GO:0000035">
    <property type="term" value="F:acyl binding"/>
    <property type="evidence" value="ECO:0007669"/>
    <property type="project" value="TreeGrafter"/>
</dbReference>
<dbReference type="GO" id="GO:0000036">
    <property type="term" value="F:acyl carrier activity"/>
    <property type="evidence" value="ECO:0007669"/>
    <property type="project" value="UniProtKB-UniRule"/>
</dbReference>
<dbReference type="GO" id="GO:0009245">
    <property type="term" value="P:lipid A biosynthetic process"/>
    <property type="evidence" value="ECO:0007669"/>
    <property type="project" value="TreeGrafter"/>
</dbReference>
<dbReference type="FunFam" id="1.10.1200.10:FF:000001">
    <property type="entry name" value="Acyl carrier protein"/>
    <property type="match status" value="1"/>
</dbReference>
<dbReference type="Gene3D" id="1.10.1200.10">
    <property type="entry name" value="ACP-like"/>
    <property type="match status" value="1"/>
</dbReference>
<dbReference type="HAMAP" id="MF_01217">
    <property type="entry name" value="Acyl_carrier"/>
    <property type="match status" value="1"/>
</dbReference>
<dbReference type="InterPro" id="IPR003231">
    <property type="entry name" value="ACP"/>
</dbReference>
<dbReference type="InterPro" id="IPR036736">
    <property type="entry name" value="ACP-like_sf"/>
</dbReference>
<dbReference type="InterPro" id="IPR009081">
    <property type="entry name" value="PP-bd_ACP"/>
</dbReference>
<dbReference type="InterPro" id="IPR006162">
    <property type="entry name" value="Ppantetheine_attach_site"/>
</dbReference>
<dbReference type="NCBIfam" id="TIGR00517">
    <property type="entry name" value="acyl_carrier"/>
    <property type="match status" value="1"/>
</dbReference>
<dbReference type="NCBIfam" id="NF002148">
    <property type="entry name" value="PRK00982.1-2"/>
    <property type="match status" value="1"/>
</dbReference>
<dbReference type="NCBIfam" id="NF002149">
    <property type="entry name" value="PRK00982.1-3"/>
    <property type="match status" value="1"/>
</dbReference>
<dbReference type="NCBIfam" id="NF002150">
    <property type="entry name" value="PRK00982.1-4"/>
    <property type="match status" value="1"/>
</dbReference>
<dbReference type="NCBIfam" id="NF002151">
    <property type="entry name" value="PRK00982.1-5"/>
    <property type="match status" value="1"/>
</dbReference>
<dbReference type="PANTHER" id="PTHR20863">
    <property type="entry name" value="ACYL CARRIER PROTEIN"/>
    <property type="match status" value="1"/>
</dbReference>
<dbReference type="PANTHER" id="PTHR20863:SF76">
    <property type="entry name" value="CARRIER DOMAIN-CONTAINING PROTEIN"/>
    <property type="match status" value="1"/>
</dbReference>
<dbReference type="Pfam" id="PF00550">
    <property type="entry name" value="PP-binding"/>
    <property type="match status" value="1"/>
</dbReference>
<dbReference type="SUPFAM" id="SSF47336">
    <property type="entry name" value="ACP-like"/>
    <property type="match status" value="1"/>
</dbReference>
<dbReference type="PROSITE" id="PS50075">
    <property type="entry name" value="CARRIER"/>
    <property type="match status" value="1"/>
</dbReference>
<dbReference type="PROSITE" id="PS00012">
    <property type="entry name" value="PHOSPHOPANTETHEINE"/>
    <property type="match status" value="1"/>
</dbReference>
<reference key="1">
    <citation type="journal article" date="2007" name="Genome Biol.">
        <title>Characterization and modeling of the Haemophilus influenzae core and supragenomes based on the complete genomic sequences of Rd and 12 clinical nontypeable strains.</title>
        <authorList>
            <person name="Hogg J.S."/>
            <person name="Hu F.Z."/>
            <person name="Janto B."/>
            <person name="Boissy R."/>
            <person name="Hayes J."/>
            <person name="Keefe R."/>
            <person name="Post J.C."/>
            <person name="Ehrlich G.D."/>
        </authorList>
    </citation>
    <scope>NUCLEOTIDE SEQUENCE [LARGE SCALE GENOMIC DNA]</scope>
    <source>
        <strain>PittGG</strain>
    </source>
</reference>
<organism>
    <name type="scientific">Haemophilus influenzae (strain PittGG)</name>
    <dbReference type="NCBI Taxonomy" id="374931"/>
    <lineage>
        <taxon>Bacteria</taxon>
        <taxon>Pseudomonadati</taxon>
        <taxon>Pseudomonadota</taxon>
        <taxon>Gammaproteobacteria</taxon>
        <taxon>Pasteurellales</taxon>
        <taxon>Pasteurellaceae</taxon>
        <taxon>Haemophilus</taxon>
    </lineage>
</organism>
<name>ACP_HAEIG</name>
<keyword id="KW-0963">Cytoplasm</keyword>
<keyword id="KW-0275">Fatty acid biosynthesis</keyword>
<keyword id="KW-0276">Fatty acid metabolism</keyword>
<keyword id="KW-0444">Lipid biosynthesis</keyword>
<keyword id="KW-0443">Lipid metabolism</keyword>
<keyword id="KW-0596">Phosphopantetheine</keyword>
<keyword id="KW-0597">Phosphoprotein</keyword>
<feature type="chain" id="PRO_1000066618" description="Acyl carrier protein">
    <location>
        <begin position="1"/>
        <end position="76"/>
    </location>
</feature>
<feature type="domain" description="Carrier" evidence="2">
    <location>
        <begin position="1"/>
        <end position="76"/>
    </location>
</feature>
<feature type="modified residue" description="O-(pantetheine 4'-phosphoryl)serine" evidence="2">
    <location>
        <position position="36"/>
    </location>
</feature>
<proteinExistence type="inferred from homology"/>
<sequence length="76" mass="8584">MSIEERVKKIIVEQLGVKEEDVKPEASFVEDLGADSLDTVELVMALEEEFDIEIPDEEAEKITTVQSAIDYVQNNQ</sequence>
<evidence type="ECO:0000255" key="1">
    <source>
        <dbReference type="HAMAP-Rule" id="MF_01217"/>
    </source>
</evidence>
<evidence type="ECO:0000255" key="2">
    <source>
        <dbReference type="PROSITE-ProRule" id="PRU00258"/>
    </source>
</evidence>